<comment type="subunit">
    <text evidence="1">Part of the 50S ribosomal subunit.</text>
</comment>
<comment type="similarity">
    <text evidence="1">Belongs to the universal ribosomal protein uL30 family.</text>
</comment>
<feature type="chain" id="PRO_0000273772" description="Large ribosomal subunit protein uL30">
    <location>
        <begin position="1"/>
        <end position="61"/>
    </location>
</feature>
<keyword id="KW-0687">Ribonucleoprotein</keyword>
<keyword id="KW-0689">Ribosomal protein</keyword>
<gene>
    <name evidence="1" type="primary">rpmD</name>
    <name type="ordered locus">CPS_0619</name>
</gene>
<proteinExistence type="inferred from homology"/>
<evidence type="ECO:0000255" key="1">
    <source>
        <dbReference type="HAMAP-Rule" id="MF_01371"/>
    </source>
</evidence>
<evidence type="ECO:0000305" key="2"/>
<organism>
    <name type="scientific">Colwellia psychrerythraea (strain 34H / ATCC BAA-681)</name>
    <name type="common">Vibrio psychroerythus</name>
    <dbReference type="NCBI Taxonomy" id="167879"/>
    <lineage>
        <taxon>Bacteria</taxon>
        <taxon>Pseudomonadati</taxon>
        <taxon>Pseudomonadota</taxon>
        <taxon>Gammaproteobacteria</taxon>
        <taxon>Alteromonadales</taxon>
        <taxon>Colwelliaceae</taxon>
        <taxon>Colwellia</taxon>
    </lineage>
</organism>
<reference key="1">
    <citation type="journal article" date="2005" name="Proc. Natl. Acad. Sci. U.S.A.">
        <title>The psychrophilic lifestyle as revealed by the genome sequence of Colwellia psychrerythraea 34H through genomic and proteomic analyses.</title>
        <authorList>
            <person name="Methe B.A."/>
            <person name="Nelson K.E."/>
            <person name="Deming J.W."/>
            <person name="Momen B."/>
            <person name="Melamud E."/>
            <person name="Zhang X."/>
            <person name="Moult J."/>
            <person name="Madupu R."/>
            <person name="Nelson W.C."/>
            <person name="Dodson R.J."/>
            <person name="Brinkac L.M."/>
            <person name="Daugherty S.C."/>
            <person name="Durkin A.S."/>
            <person name="DeBoy R.T."/>
            <person name="Kolonay J.F."/>
            <person name="Sullivan S.A."/>
            <person name="Zhou L."/>
            <person name="Davidsen T.M."/>
            <person name="Wu M."/>
            <person name="Huston A.L."/>
            <person name="Lewis M."/>
            <person name="Weaver B."/>
            <person name="Weidman J.F."/>
            <person name="Khouri H."/>
            <person name="Utterback T.R."/>
            <person name="Feldblyum T.V."/>
            <person name="Fraser C.M."/>
        </authorList>
    </citation>
    <scope>NUCLEOTIDE SEQUENCE [LARGE SCALE GENOMIC DNA]</scope>
    <source>
        <strain>34H / ATCC BAA-681</strain>
    </source>
</reference>
<name>RL30_COLP3</name>
<protein>
    <recommendedName>
        <fullName evidence="1">Large ribosomal subunit protein uL30</fullName>
    </recommendedName>
    <alternativeName>
        <fullName evidence="2">50S ribosomal protein L30</fullName>
    </alternativeName>
</protein>
<accession>Q488Z5</accession>
<sequence length="61" mass="7011">MRMSKTVKVTQLKSSIGRLPKHRATLKGLGLRRINHTVELEDTPSVRGMINKVYYMVKVED</sequence>
<dbReference type="EMBL" id="CP000083">
    <property type="protein sequence ID" value="AAZ25628.1"/>
    <property type="molecule type" value="Genomic_DNA"/>
</dbReference>
<dbReference type="SMR" id="Q488Z5"/>
<dbReference type="STRING" id="167879.CPS_0619"/>
<dbReference type="KEGG" id="cps:CPS_0619"/>
<dbReference type="eggNOG" id="COG1841">
    <property type="taxonomic scope" value="Bacteria"/>
</dbReference>
<dbReference type="HOGENOM" id="CLU_131047_1_4_6"/>
<dbReference type="Proteomes" id="UP000000547">
    <property type="component" value="Chromosome"/>
</dbReference>
<dbReference type="GO" id="GO:0022625">
    <property type="term" value="C:cytosolic large ribosomal subunit"/>
    <property type="evidence" value="ECO:0007669"/>
    <property type="project" value="TreeGrafter"/>
</dbReference>
<dbReference type="GO" id="GO:0003735">
    <property type="term" value="F:structural constituent of ribosome"/>
    <property type="evidence" value="ECO:0007669"/>
    <property type="project" value="InterPro"/>
</dbReference>
<dbReference type="GO" id="GO:0006412">
    <property type="term" value="P:translation"/>
    <property type="evidence" value="ECO:0007669"/>
    <property type="project" value="UniProtKB-UniRule"/>
</dbReference>
<dbReference type="CDD" id="cd01658">
    <property type="entry name" value="Ribosomal_L30"/>
    <property type="match status" value="1"/>
</dbReference>
<dbReference type="FunFam" id="3.30.1390.20:FF:000001">
    <property type="entry name" value="50S ribosomal protein L30"/>
    <property type="match status" value="1"/>
</dbReference>
<dbReference type="Gene3D" id="3.30.1390.20">
    <property type="entry name" value="Ribosomal protein L30, ferredoxin-like fold domain"/>
    <property type="match status" value="1"/>
</dbReference>
<dbReference type="HAMAP" id="MF_01371_B">
    <property type="entry name" value="Ribosomal_uL30_B"/>
    <property type="match status" value="1"/>
</dbReference>
<dbReference type="InterPro" id="IPR036919">
    <property type="entry name" value="Ribo_uL30_ferredoxin-like_sf"/>
</dbReference>
<dbReference type="InterPro" id="IPR005996">
    <property type="entry name" value="Ribosomal_uL30_bac-type"/>
</dbReference>
<dbReference type="InterPro" id="IPR018038">
    <property type="entry name" value="Ribosomal_uL30_CS"/>
</dbReference>
<dbReference type="InterPro" id="IPR016082">
    <property type="entry name" value="Ribosomal_uL30_ferredoxin-like"/>
</dbReference>
<dbReference type="NCBIfam" id="TIGR01308">
    <property type="entry name" value="rpmD_bact"/>
    <property type="match status" value="1"/>
</dbReference>
<dbReference type="PANTHER" id="PTHR15892:SF2">
    <property type="entry name" value="LARGE RIBOSOMAL SUBUNIT PROTEIN UL30M"/>
    <property type="match status" value="1"/>
</dbReference>
<dbReference type="PANTHER" id="PTHR15892">
    <property type="entry name" value="MITOCHONDRIAL RIBOSOMAL PROTEIN L30"/>
    <property type="match status" value="1"/>
</dbReference>
<dbReference type="Pfam" id="PF00327">
    <property type="entry name" value="Ribosomal_L30"/>
    <property type="match status" value="1"/>
</dbReference>
<dbReference type="PIRSF" id="PIRSF002211">
    <property type="entry name" value="Ribosomal_L30_bac-type"/>
    <property type="match status" value="1"/>
</dbReference>
<dbReference type="SUPFAM" id="SSF55129">
    <property type="entry name" value="Ribosomal protein L30p/L7e"/>
    <property type="match status" value="1"/>
</dbReference>
<dbReference type="PROSITE" id="PS00634">
    <property type="entry name" value="RIBOSOMAL_L30"/>
    <property type="match status" value="1"/>
</dbReference>